<organism>
    <name type="scientific">Malacoplasma penetrans (strain HF-2)</name>
    <name type="common">Mycoplasma penetrans</name>
    <dbReference type="NCBI Taxonomy" id="272633"/>
    <lineage>
        <taxon>Bacteria</taxon>
        <taxon>Bacillati</taxon>
        <taxon>Mycoplasmatota</taxon>
        <taxon>Mycoplasmoidales</taxon>
        <taxon>Mycoplasmoidaceae</taxon>
        <taxon>Malacoplasma</taxon>
    </lineage>
</organism>
<proteinExistence type="inferred from homology"/>
<reference key="1">
    <citation type="journal article" date="2002" name="Nucleic Acids Res.">
        <title>The complete genomic sequence of Mycoplasma penetrans, an intracellular bacterial pathogen in humans.</title>
        <authorList>
            <person name="Sasaki Y."/>
            <person name="Ishikawa J."/>
            <person name="Yamashita A."/>
            <person name="Oshima K."/>
            <person name="Kenri T."/>
            <person name="Furuya K."/>
            <person name="Yoshino C."/>
            <person name="Horino A."/>
            <person name="Shiba T."/>
            <person name="Sasaki T."/>
            <person name="Hattori M."/>
        </authorList>
    </citation>
    <scope>NUCLEOTIDE SEQUENCE [LARGE SCALE GENOMIC DNA]</scope>
    <source>
        <strain>HF-2</strain>
    </source>
</reference>
<dbReference type="EMBL" id="BA000026">
    <property type="protein sequence ID" value="BAC44600.1"/>
    <property type="molecule type" value="Genomic_DNA"/>
</dbReference>
<dbReference type="RefSeq" id="WP_011077629.1">
    <property type="nucleotide sequence ID" value="NC_004432.1"/>
</dbReference>
<dbReference type="SMR" id="Q8EUW1"/>
<dbReference type="FunCoup" id="Q8EUW1">
    <property type="interactions" value="98"/>
</dbReference>
<dbReference type="STRING" id="272633.gene:10731929"/>
<dbReference type="KEGG" id="mpe:MYPE8070"/>
<dbReference type="eggNOG" id="COG0718">
    <property type="taxonomic scope" value="Bacteria"/>
</dbReference>
<dbReference type="HOGENOM" id="CLU_140930_1_2_14"/>
<dbReference type="InParanoid" id="Q8EUW1"/>
<dbReference type="Proteomes" id="UP000002522">
    <property type="component" value="Chromosome"/>
</dbReference>
<dbReference type="GO" id="GO:0043590">
    <property type="term" value="C:bacterial nucleoid"/>
    <property type="evidence" value="ECO:0007669"/>
    <property type="project" value="UniProtKB-UniRule"/>
</dbReference>
<dbReference type="GO" id="GO:0005737">
    <property type="term" value="C:cytoplasm"/>
    <property type="evidence" value="ECO:0007669"/>
    <property type="project" value="UniProtKB-UniRule"/>
</dbReference>
<dbReference type="GO" id="GO:0003677">
    <property type="term" value="F:DNA binding"/>
    <property type="evidence" value="ECO:0007669"/>
    <property type="project" value="UniProtKB-UniRule"/>
</dbReference>
<dbReference type="Gene3D" id="3.30.1310.10">
    <property type="entry name" value="Nucleoid-associated protein YbaB-like domain"/>
    <property type="match status" value="1"/>
</dbReference>
<dbReference type="HAMAP" id="MF_00274">
    <property type="entry name" value="DNA_YbaB_EbfC"/>
    <property type="match status" value="1"/>
</dbReference>
<dbReference type="InterPro" id="IPR036894">
    <property type="entry name" value="YbaB-like_sf"/>
</dbReference>
<dbReference type="InterPro" id="IPR004401">
    <property type="entry name" value="YbaB/EbfC"/>
</dbReference>
<dbReference type="NCBIfam" id="TIGR00103">
    <property type="entry name" value="DNA_YbaB_EbfC"/>
    <property type="match status" value="1"/>
</dbReference>
<dbReference type="Pfam" id="PF02575">
    <property type="entry name" value="YbaB_DNA_bd"/>
    <property type="match status" value="1"/>
</dbReference>
<dbReference type="PIRSF" id="PIRSF004555">
    <property type="entry name" value="UCP004555"/>
    <property type="match status" value="1"/>
</dbReference>
<dbReference type="SUPFAM" id="SSF82607">
    <property type="entry name" value="YbaB-like"/>
    <property type="match status" value="1"/>
</dbReference>
<name>Y807_MALP2</name>
<accession>Q8EUW1</accession>
<keyword id="KW-0963">Cytoplasm</keyword>
<keyword id="KW-0238">DNA-binding</keyword>
<keyword id="KW-1185">Reference proteome</keyword>
<feature type="chain" id="PRO_0000170409" description="Nucleoid-associated protein MYPE8070">
    <location>
        <begin position="1"/>
        <end position="94"/>
    </location>
</feature>
<evidence type="ECO:0000255" key="1">
    <source>
        <dbReference type="HAMAP-Rule" id="MF_00274"/>
    </source>
</evidence>
<comment type="function">
    <text evidence="1">Binds to DNA and alters its conformation. May be involved in regulation of gene expression, nucleoid organization and DNA protection.</text>
</comment>
<comment type="subunit">
    <text evidence="1">Homodimer.</text>
</comment>
<comment type="subcellular location">
    <subcellularLocation>
        <location evidence="1">Cytoplasm</location>
        <location evidence="1">Nucleoid</location>
    </subcellularLocation>
</comment>
<comment type="similarity">
    <text evidence="1">Belongs to the YbaB/EbfC family.</text>
</comment>
<protein>
    <recommendedName>
        <fullName evidence="1">Nucleoid-associated protein MYPE8070</fullName>
    </recommendedName>
</protein>
<gene>
    <name type="ordered locus">MYPE8070</name>
</gene>
<sequence>MNMQKMLQQAKALQSKMEKKIKEFEQEEFEFVYQKSITIQIKGNYEIIKMDINKELIDPEDKTMLEEMISEAINEAISAITEEKEKITKGAMPF</sequence>